<organism>
    <name type="scientific">Clostridioides difficile (strain 630)</name>
    <name type="common">Peptoclostridium difficile</name>
    <dbReference type="NCBI Taxonomy" id="272563"/>
    <lineage>
        <taxon>Bacteria</taxon>
        <taxon>Bacillati</taxon>
        <taxon>Bacillota</taxon>
        <taxon>Clostridia</taxon>
        <taxon>Peptostreptococcales</taxon>
        <taxon>Peptostreptococcaceae</taxon>
        <taxon>Clostridioides</taxon>
    </lineage>
</organism>
<sequence>MGIITKIEQQKRNDDRVNIYVDDKFFIAIFKELVYTFNLKKGNEINEEELKPILDDEMYIKAKNKALNILSHADQSEKKLKEKLSSEFDENIIERVIDFLKSYNLVNDSVLAQKIVNTNVNLNKCGKNRIKQNLYNKGINRSTINEAVSELDKDTEFENAMYLAKKRYERVKKEDKKKIYQKISQHLSYKGFDYDIIKRVLNKLLNFDEYDI</sequence>
<gene>
    <name evidence="1" type="primary">recX</name>
    <name type="ordered locus">CD630_25250</name>
</gene>
<comment type="function">
    <text evidence="1">Modulates RecA activity.</text>
</comment>
<comment type="subcellular location">
    <subcellularLocation>
        <location evidence="1">Cytoplasm</location>
    </subcellularLocation>
</comment>
<comment type="similarity">
    <text evidence="1">Belongs to the RecX family.</text>
</comment>
<protein>
    <recommendedName>
        <fullName evidence="1">Regulatory protein RecX</fullName>
    </recommendedName>
</protein>
<dbReference type="EMBL" id="AM180355">
    <property type="protein sequence ID" value="CAJ69412.1"/>
    <property type="molecule type" value="Genomic_DNA"/>
</dbReference>
<dbReference type="RefSeq" id="WP_004454825.1">
    <property type="nucleotide sequence ID" value="NZ_JAUPES010000003.1"/>
</dbReference>
<dbReference type="RefSeq" id="YP_001089039.1">
    <property type="nucleotide sequence ID" value="NC_009089.1"/>
</dbReference>
<dbReference type="SMR" id="Q182L1"/>
<dbReference type="STRING" id="272563.CD630_25250"/>
<dbReference type="EnsemblBacteria" id="CAJ69412">
    <property type="protein sequence ID" value="CAJ69412"/>
    <property type="gene ID" value="CD630_25250"/>
</dbReference>
<dbReference type="GeneID" id="66354925"/>
<dbReference type="KEGG" id="cdf:CD630_25250"/>
<dbReference type="KEGG" id="pdc:CDIF630_02777"/>
<dbReference type="PATRIC" id="fig|272563.120.peg.2665"/>
<dbReference type="eggNOG" id="COG2137">
    <property type="taxonomic scope" value="Bacteria"/>
</dbReference>
<dbReference type="OrthoDB" id="5421057at2"/>
<dbReference type="PhylomeDB" id="Q182L1"/>
<dbReference type="BioCyc" id="PDIF272563:G12WB-2680-MONOMER"/>
<dbReference type="Proteomes" id="UP000001978">
    <property type="component" value="Chromosome"/>
</dbReference>
<dbReference type="GO" id="GO:0005737">
    <property type="term" value="C:cytoplasm"/>
    <property type="evidence" value="ECO:0007669"/>
    <property type="project" value="UniProtKB-SubCell"/>
</dbReference>
<dbReference type="GO" id="GO:0006282">
    <property type="term" value="P:regulation of DNA repair"/>
    <property type="evidence" value="ECO:0007669"/>
    <property type="project" value="UniProtKB-UniRule"/>
</dbReference>
<dbReference type="Gene3D" id="1.10.10.10">
    <property type="entry name" value="Winged helix-like DNA-binding domain superfamily/Winged helix DNA-binding domain"/>
    <property type="match status" value="3"/>
</dbReference>
<dbReference type="HAMAP" id="MF_01114">
    <property type="entry name" value="RecX"/>
    <property type="match status" value="1"/>
</dbReference>
<dbReference type="InterPro" id="IPR053926">
    <property type="entry name" value="RecX_HTH_1st"/>
</dbReference>
<dbReference type="InterPro" id="IPR053924">
    <property type="entry name" value="RecX_HTH_2nd"/>
</dbReference>
<dbReference type="InterPro" id="IPR053925">
    <property type="entry name" value="RecX_HTH_3rd"/>
</dbReference>
<dbReference type="InterPro" id="IPR003783">
    <property type="entry name" value="Regulatory_RecX"/>
</dbReference>
<dbReference type="InterPro" id="IPR036388">
    <property type="entry name" value="WH-like_DNA-bd_sf"/>
</dbReference>
<dbReference type="NCBIfam" id="NF001058">
    <property type="entry name" value="PRK00117.4-1"/>
    <property type="match status" value="1"/>
</dbReference>
<dbReference type="PANTHER" id="PTHR33602">
    <property type="entry name" value="REGULATORY PROTEIN RECX FAMILY PROTEIN"/>
    <property type="match status" value="1"/>
</dbReference>
<dbReference type="PANTHER" id="PTHR33602:SF1">
    <property type="entry name" value="REGULATORY PROTEIN RECX FAMILY PROTEIN"/>
    <property type="match status" value="1"/>
</dbReference>
<dbReference type="Pfam" id="PF21982">
    <property type="entry name" value="RecX_HTH1"/>
    <property type="match status" value="1"/>
</dbReference>
<dbReference type="Pfam" id="PF02631">
    <property type="entry name" value="RecX_HTH2"/>
    <property type="match status" value="1"/>
</dbReference>
<dbReference type="Pfam" id="PF21981">
    <property type="entry name" value="RecX_HTH3"/>
    <property type="match status" value="1"/>
</dbReference>
<accession>Q182L1</accession>
<keyword id="KW-0963">Cytoplasm</keyword>
<keyword id="KW-1185">Reference proteome</keyword>
<proteinExistence type="inferred from homology"/>
<reference key="1">
    <citation type="journal article" date="2006" name="Nat. Genet.">
        <title>The multidrug-resistant human pathogen Clostridium difficile has a highly mobile, mosaic genome.</title>
        <authorList>
            <person name="Sebaihia M."/>
            <person name="Wren B.W."/>
            <person name="Mullany P."/>
            <person name="Fairweather N.F."/>
            <person name="Minton N."/>
            <person name="Stabler R."/>
            <person name="Thomson N.R."/>
            <person name="Roberts A.P."/>
            <person name="Cerdeno-Tarraga A.M."/>
            <person name="Wang H."/>
            <person name="Holden M.T.G."/>
            <person name="Wright A."/>
            <person name="Churcher C."/>
            <person name="Quail M.A."/>
            <person name="Baker S."/>
            <person name="Bason N."/>
            <person name="Brooks K."/>
            <person name="Chillingworth T."/>
            <person name="Cronin A."/>
            <person name="Davis P."/>
            <person name="Dowd L."/>
            <person name="Fraser A."/>
            <person name="Feltwell T."/>
            <person name="Hance Z."/>
            <person name="Holroyd S."/>
            <person name="Jagels K."/>
            <person name="Moule S."/>
            <person name="Mungall K."/>
            <person name="Price C."/>
            <person name="Rabbinowitsch E."/>
            <person name="Sharp S."/>
            <person name="Simmonds M."/>
            <person name="Stevens K."/>
            <person name="Unwin L."/>
            <person name="Whithead S."/>
            <person name="Dupuy B."/>
            <person name="Dougan G."/>
            <person name="Barrell B."/>
            <person name="Parkhill J."/>
        </authorList>
    </citation>
    <scope>NUCLEOTIDE SEQUENCE [LARGE SCALE GENOMIC DNA]</scope>
    <source>
        <strain>630</strain>
    </source>
</reference>
<name>RECX_CLOD6</name>
<evidence type="ECO:0000255" key="1">
    <source>
        <dbReference type="HAMAP-Rule" id="MF_01114"/>
    </source>
</evidence>
<feature type="chain" id="PRO_1000073032" description="Regulatory protein RecX">
    <location>
        <begin position="1"/>
        <end position="212"/>
    </location>
</feature>